<name>TDH_RHIEC</name>
<keyword id="KW-0963">Cytoplasm</keyword>
<keyword id="KW-0479">Metal-binding</keyword>
<keyword id="KW-0520">NAD</keyword>
<keyword id="KW-0560">Oxidoreductase</keyword>
<keyword id="KW-1185">Reference proteome</keyword>
<keyword id="KW-0862">Zinc</keyword>
<protein>
    <recommendedName>
        <fullName evidence="1">L-threonine 3-dehydrogenase</fullName>
        <shortName evidence="1">TDH</shortName>
        <ecNumber evidence="1">1.1.1.103</ecNumber>
    </recommendedName>
</protein>
<evidence type="ECO:0000255" key="1">
    <source>
        <dbReference type="HAMAP-Rule" id="MF_00627"/>
    </source>
</evidence>
<comment type="function">
    <text evidence="1">Catalyzes the NAD(+)-dependent oxidation of L-threonine to 2-amino-3-ketobutyrate.</text>
</comment>
<comment type="catalytic activity">
    <reaction evidence="1">
        <text>L-threonine + NAD(+) = (2S)-2-amino-3-oxobutanoate + NADH + H(+)</text>
        <dbReference type="Rhea" id="RHEA:13161"/>
        <dbReference type="ChEBI" id="CHEBI:15378"/>
        <dbReference type="ChEBI" id="CHEBI:57540"/>
        <dbReference type="ChEBI" id="CHEBI:57926"/>
        <dbReference type="ChEBI" id="CHEBI:57945"/>
        <dbReference type="ChEBI" id="CHEBI:78948"/>
        <dbReference type="EC" id="1.1.1.103"/>
    </reaction>
</comment>
<comment type="cofactor">
    <cofactor evidence="1">
        <name>Zn(2+)</name>
        <dbReference type="ChEBI" id="CHEBI:29105"/>
    </cofactor>
    <text evidence="1">Binds 2 Zn(2+) ions per subunit.</text>
</comment>
<comment type="pathway">
    <text evidence="1">Amino-acid degradation; L-threonine degradation via oxydo-reductase pathway; glycine from L-threonine: step 1/2.</text>
</comment>
<comment type="subunit">
    <text evidence="1">Homotetramer.</text>
</comment>
<comment type="subcellular location">
    <subcellularLocation>
        <location evidence="1">Cytoplasm</location>
    </subcellularLocation>
</comment>
<comment type="similarity">
    <text evidence="1">Belongs to the zinc-containing alcohol dehydrogenase family.</text>
</comment>
<gene>
    <name evidence="1" type="primary">tdh</name>
    <name type="ordered locus">RHE_CH02951</name>
</gene>
<dbReference type="EC" id="1.1.1.103" evidence="1"/>
<dbReference type="EMBL" id="CP000133">
    <property type="protein sequence ID" value="ABC91718.1"/>
    <property type="molecule type" value="Genomic_DNA"/>
</dbReference>
<dbReference type="RefSeq" id="WP_011426194.1">
    <property type="nucleotide sequence ID" value="NC_007761.1"/>
</dbReference>
<dbReference type="SMR" id="Q2K618"/>
<dbReference type="KEGG" id="ret:RHE_CH02951"/>
<dbReference type="eggNOG" id="COG1063">
    <property type="taxonomic scope" value="Bacteria"/>
</dbReference>
<dbReference type="HOGENOM" id="CLU_026673_11_0_5"/>
<dbReference type="OrthoDB" id="9773078at2"/>
<dbReference type="UniPathway" id="UPA00046">
    <property type="reaction ID" value="UER00505"/>
</dbReference>
<dbReference type="Proteomes" id="UP000001936">
    <property type="component" value="Chromosome"/>
</dbReference>
<dbReference type="GO" id="GO:0005737">
    <property type="term" value="C:cytoplasm"/>
    <property type="evidence" value="ECO:0007669"/>
    <property type="project" value="UniProtKB-SubCell"/>
</dbReference>
<dbReference type="GO" id="GO:0008743">
    <property type="term" value="F:L-threonine 3-dehydrogenase activity"/>
    <property type="evidence" value="ECO:0007669"/>
    <property type="project" value="UniProtKB-UniRule"/>
</dbReference>
<dbReference type="GO" id="GO:0008270">
    <property type="term" value="F:zinc ion binding"/>
    <property type="evidence" value="ECO:0007669"/>
    <property type="project" value="UniProtKB-UniRule"/>
</dbReference>
<dbReference type="GO" id="GO:0019518">
    <property type="term" value="P:L-threonine catabolic process to glycine"/>
    <property type="evidence" value="ECO:0007669"/>
    <property type="project" value="UniProtKB-UniPathway"/>
</dbReference>
<dbReference type="Gene3D" id="3.90.180.10">
    <property type="entry name" value="Medium-chain alcohol dehydrogenases, catalytic domain"/>
    <property type="match status" value="1"/>
</dbReference>
<dbReference type="Gene3D" id="3.40.50.720">
    <property type="entry name" value="NAD(P)-binding Rossmann-like Domain"/>
    <property type="match status" value="1"/>
</dbReference>
<dbReference type="HAMAP" id="MF_00627">
    <property type="entry name" value="Thr_dehydrog"/>
    <property type="match status" value="1"/>
</dbReference>
<dbReference type="InterPro" id="IPR013149">
    <property type="entry name" value="ADH-like_C"/>
</dbReference>
<dbReference type="InterPro" id="IPR013154">
    <property type="entry name" value="ADH-like_N"/>
</dbReference>
<dbReference type="InterPro" id="IPR002328">
    <property type="entry name" value="ADH_Zn_CS"/>
</dbReference>
<dbReference type="InterPro" id="IPR011032">
    <property type="entry name" value="GroES-like_sf"/>
</dbReference>
<dbReference type="InterPro" id="IPR004627">
    <property type="entry name" value="L-Threonine_3-DHase"/>
</dbReference>
<dbReference type="InterPro" id="IPR036291">
    <property type="entry name" value="NAD(P)-bd_dom_sf"/>
</dbReference>
<dbReference type="InterPro" id="IPR020843">
    <property type="entry name" value="PKS_ER"/>
</dbReference>
<dbReference type="InterPro" id="IPR050129">
    <property type="entry name" value="Zn_alcohol_dh"/>
</dbReference>
<dbReference type="NCBIfam" id="NF003808">
    <property type="entry name" value="PRK05396.1"/>
    <property type="match status" value="1"/>
</dbReference>
<dbReference type="NCBIfam" id="TIGR00692">
    <property type="entry name" value="tdh"/>
    <property type="match status" value="1"/>
</dbReference>
<dbReference type="PANTHER" id="PTHR43401">
    <property type="entry name" value="L-THREONINE 3-DEHYDROGENASE"/>
    <property type="match status" value="1"/>
</dbReference>
<dbReference type="PANTHER" id="PTHR43401:SF2">
    <property type="entry name" value="L-THREONINE 3-DEHYDROGENASE"/>
    <property type="match status" value="1"/>
</dbReference>
<dbReference type="Pfam" id="PF08240">
    <property type="entry name" value="ADH_N"/>
    <property type="match status" value="1"/>
</dbReference>
<dbReference type="Pfam" id="PF00107">
    <property type="entry name" value="ADH_zinc_N"/>
    <property type="match status" value="1"/>
</dbReference>
<dbReference type="SMART" id="SM00829">
    <property type="entry name" value="PKS_ER"/>
    <property type="match status" value="1"/>
</dbReference>
<dbReference type="SUPFAM" id="SSF50129">
    <property type="entry name" value="GroES-like"/>
    <property type="match status" value="1"/>
</dbReference>
<dbReference type="SUPFAM" id="SSF51735">
    <property type="entry name" value="NAD(P)-binding Rossmann-fold domains"/>
    <property type="match status" value="1"/>
</dbReference>
<dbReference type="PROSITE" id="PS00059">
    <property type="entry name" value="ADH_ZINC"/>
    <property type="match status" value="1"/>
</dbReference>
<sequence>MSNMMKALVKSKPEVGLWMENVPVPEVGPNDVLIRVKKSAICGTDVHIWNWDQWAQKTIPVPMVVGHEFSGEIAEIGSAVTRYHVGERVSGEGHIVCGKCRNCRAGRGHLCRNTLGVGVNRPGSFGEFVCIPESNVVPIPDDISDEIAAIFDPFGNAVHTALSFDLVGEDVLVTGAGPIGIMGALVAKRSGARKVVITDINPHRLDLARKLGIDHVVDASKENLADVMKAIGMTEGFDVGLEMSGAAPAFRDMIDKMNNGGKIAILGIAPAGFEIDWNKVIFKMLNLKGIYGREMFETWYKMIAFVQGGLDLSPIITHRIKIDDFRDGFEAMRSGNSGKVVMDWM</sequence>
<proteinExistence type="inferred from homology"/>
<feature type="chain" id="PRO_1000051648" description="L-threonine 3-dehydrogenase">
    <location>
        <begin position="1"/>
        <end position="345"/>
    </location>
</feature>
<feature type="active site" description="Charge relay system" evidence="1">
    <location>
        <position position="44"/>
    </location>
</feature>
<feature type="active site" description="Charge relay system" evidence="1">
    <location>
        <position position="47"/>
    </location>
</feature>
<feature type="binding site" evidence="1">
    <location>
        <position position="42"/>
    </location>
    <ligand>
        <name>Zn(2+)</name>
        <dbReference type="ChEBI" id="CHEBI:29105"/>
        <label>1</label>
        <note>catalytic</note>
    </ligand>
</feature>
<feature type="binding site" evidence="1">
    <location>
        <position position="67"/>
    </location>
    <ligand>
        <name>Zn(2+)</name>
        <dbReference type="ChEBI" id="CHEBI:29105"/>
        <label>1</label>
        <note>catalytic</note>
    </ligand>
</feature>
<feature type="binding site" evidence="1">
    <location>
        <position position="68"/>
    </location>
    <ligand>
        <name>Zn(2+)</name>
        <dbReference type="ChEBI" id="CHEBI:29105"/>
        <label>1</label>
        <note>catalytic</note>
    </ligand>
</feature>
<feature type="binding site" evidence="1">
    <location>
        <position position="97"/>
    </location>
    <ligand>
        <name>Zn(2+)</name>
        <dbReference type="ChEBI" id="CHEBI:29105"/>
        <label>2</label>
    </ligand>
</feature>
<feature type="binding site" evidence="1">
    <location>
        <position position="100"/>
    </location>
    <ligand>
        <name>Zn(2+)</name>
        <dbReference type="ChEBI" id="CHEBI:29105"/>
        <label>2</label>
    </ligand>
</feature>
<feature type="binding site" evidence="1">
    <location>
        <position position="103"/>
    </location>
    <ligand>
        <name>Zn(2+)</name>
        <dbReference type="ChEBI" id="CHEBI:29105"/>
        <label>2</label>
    </ligand>
</feature>
<feature type="binding site" evidence="1">
    <location>
        <position position="111"/>
    </location>
    <ligand>
        <name>Zn(2+)</name>
        <dbReference type="ChEBI" id="CHEBI:29105"/>
        <label>2</label>
    </ligand>
</feature>
<feature type="binding site" evidence="1">
    <location>
        <position position="179"/>
    </location>
    <ligand>
        <name>NAD(+)</name>
        <dbReference type="ChEBI" id="CHEBI:57540"/>
    </ligand>
</feature>
<feature type="binding site" evidence="1">
    <location>
        <position position="199"/>
    </location>
    <ligand>
        <name>NAD(+)</name>
        <dbReference type="ChEBI" id="CHEBI:57540"/>
    </ligand>
</feature>
<feature type="binding site" evidence="1">
    <location>
        <position position="204"/>
    </location>
    <ligand>
        <name>NAD(+)</name>
        <dbReference type="ChEBI" id="CHEBI:57540"/>
    </ligand>
</feature>
<feature type="binding site" evidence="1">
    <location>
        <begin position="266"/>
        <end position="268"/>
    </location>
    <ligand>
        <name>NAD(+)</name>
        <dbReference type="ChEBI" id="CHEBI:57540"/>
    </ligand>
</feature>
<feature type="binding site" evidence="1">
    <location>
        <begin position="290"/>
        <end position="291"/>
    </location>
    <ligand>
        <name>NAD(+)</name>
        <dbReference type="ChEBI" id="CHEBI:57540"/>
    </ligand>
</feature>
<feature type="site" description="Important for catalytic activity for the proton relay mechanism but does not participate directly in the coordination of zinc atom" evidence="1">
    <location>
        <position position="152"/>
    </location>
</feature>
<reference key="1">
    <citation type="journal article" date="2006" name="Proc. Natl. Acad. Sci. U.S.A.">
        <title>The partitioned Rhizobium etli genome: genetic and metabolic redundancy in seven interacting replicons.</title>
        <authorList>
            <person name="Gonzalez V."/>
            <person name="Santamaria R.I."/>
            <person name="Bustos P."/>
            <person name="Hernandez-Gonzalez I."/>
            <person name="Medrano-Soto A."/>
            <person name="Moreno-Hagelsieb G."/>
            <person name="Janga S.C."/>
            <person name="Ramirez M.A."/>
            <person name="Jimenez-Jacinto V."/>
            <person name="Collado-Vides J."/>
            <person name="Davila G."/>
        </authorList>
    </citation>
    <scope>NUCLEOTIDE SEQUENCE [LARGE SCALE GENOMIC DNA]</scope>
    <source>
        <strain>ATCC 51251 / DSM 11541 / JCM 21823 / NBRC 15573 / CFN 42</strain>
    </source>
</reference>
<organism>
    <name type="scientific">Rhizobium etli (strain ATCC 51251 / DSM 11541 / JCM 21823 / NBRC 15573 / CFN 42)</name>
    <dbReference type="NCBI Taxonomy" id="347834"/>
    <lineage>
        <taxon>Bacteria</taxon>
        <taxon>Pseudomonadati</taxon>
        <taxon>Pseudomonadota</taxon>
        <taxon>Alphaproteobacteria</taxon>
        <taxon>Hyphomicrobiales</taxon>
        <taxon>Rhizobiaceae</taxon>
        <taxon>Rhizobium/Agrobacterium group</taxon>
        <taxon>Rhizobium</taxon>
    </lineage>
</organism>
<accession>Q2K618</accession>